<evidence type="ECO:0000250" key="1"/>
<evidence type="ECO:0000255" key="2"/>
<evidence type="ECO:0000256" key="3">
    <source>
        <dbReference type="SAM" id="MobiDB-lite"/>
    </source>
</evidence>
<evidence type="ECO:0000305" key="4"/>
<proteinExistence type="inferred from homology"/>
<name>MSH3_YARLI</name>
<organism>
    <name type="scientific">Yarrowia lipolytica (strain CLIB 122 / E 150)</name>
    <name type="common">Yeast</name>
    <name type="synonym">Candida lipolytica</name>
    <dbReference type="NCBI Taxonomy" id="284591"/>
    <lineage>
        <taxon>Eukaryota</taxon>
        <taxon>Fungi</taxon>
        <taxon>Dikarya</taxon>
        <taxon>Ascomycota</taxon>
        <taxon>Saccharomycotina</taxon>
        <taxon>Dipodascomycetes</taxon>
        <taxon>Dipodascales</taxon>
        <taxon>Dipodascales incertae sedis</taxon>
        <taxon>Yarrowia</taxon>
    </lineage>
</organism>
<comment type="function">
    <text evidence="1">Component of the post-replicative DNA mismatch repair system (MMR). Heterodimerizes with MSH2 to form MutS beta, which binds to DNA mismatches thereby initiating DNA repair. MSH3 provides substrate-binding and substrate specificity to the complex. When bound, the MutS beta heterodimer bends the DNA helix and shields approximately 20 base pairs. Acts mainly to repair insertion-deletion loops (IDLs) from 2 to 13 nucleotides in size, but can also repair base-base and single insertion-deletion mismatches that occur during replication. After mismatch binding, forms a ternary complex with the MutL alpha heterodimer, which is thought to be responsible for directing the downstream MMR events, including strand discrimination, excision, and resynthesis. ATP binding and hydrolysis play a pivotal role in mismatch repair functions (By similarity).</text>
</comment>
<comment type="subunit">
    <text evidence="1">Heterodimer consisting of MSH2-MSH3 (MutS beta). Forms a ternary complex with MutL alpha (MLH1-PMS1) (By similarity).</text>
</comment>
<comment type="subcellular location">
    <subcellularLocation>
        <location evidence="1">Nucleus</location>
    </subcellularLocation>
</comment>
<comment type="similarity">
    <text evidence="4">Belongs to the DNA mismatch repair MutS family. MSH3 subfamily.</text>
</comment>
<gene>
    <name type="primary">MSH3</name>
    <name type="ordered locus">YALI0A09724g</name>
</gene>
<feature type="chain" id="PRO_0000338533" description="DNA mismatch repair protein MSH3">
    <location>
        <begin position="1"/>
        <end position="990"/>
    </location>
</feature>
<feature type="region of interest" description="Disordered" evidence="3">
    <location>
        <begin position="1"/>
        <end position="60"/>
    </location>
</feature>
<feature type="region of interest" description="Disordered" evidence="3">
    <location>
        <begin position="73"/>
        <end position="103"/>
    </location>
</feature>
<feature type="region of interest" description="Mispair-binding domain" evidence="1">
    <location>
        <begin position="129"/>
        <end position="261"/>
    </location>
</feature>
<feature type="binding site" evidence="2">
    <location>
        <begin position="789"/>
        <end position="796"/>
    </location>
    <ligand>
        <name>ATP</name>
        <dbReference type="ChEBI" id="CHEBI:30616"/>
    </ligand>
</feature>
<keyword id="KW-0067">ATP-binding</keyword>
<keyword id="KW-0227">DNA damage</keyword>
<keyword id="KW-0234">DNA repair</keyword>
<keyword id="KW-0238">DNA-binding</keyword>
<keyword id="KW-0547">Nucleotide-binding</keyword>
<keyword id="KW-0539">Nucleus</keyword>
<keyword id="KW-1185">Reference proteome</keyword>
<protein>
    <recommendedName>
        <fullName>DNA mismatch repair protein MSH3</fullName>
    </recommendedName>
    <alternativeName>
        <fullName>MutS protein homolog 3</fullName>
    </alternativeName>
</protein>
<reference key="1">
    <citation type="journal article" date="2004" name="Nature">
        <title>Genome evolution in yeasts.</title>
        <authorList>
            <person name="Dujon B."/>
            <person name="Sherman D."/>
            <person name="Fischer G."/>
            <person name="Durrens P."/>
            <person name="Casaregola S."/>
            <person name="Lafontaine I."/>
            <person name="de Montigny J."/>
            <person name="Marck C."/>
            <person name="Neuveglise C."/>
            <person name="Talla E."/>
            <person name="Goffard N."/>
            <person name="Frangeul L."/>
            <person name="Aigle M."/>
            <person name="Anthouard V."/>
            <person name="Babour A."/>
            <person name="Barbe V."/>
            <person name="Barnay S."/>
            <person name="Blanchin S."/>
            <person name="Beckerich J.-M."/>
            <person name="Beyne E."/>
            <person name="Bleykasten C."/>
            <person name="Boisrame A."/>
            <person name="Boyer J."/>
            <person name="Cattolico L."/>
            <person name="Confanioleri F."/>
            <person name="de Daruvar A."/>
            <person name="Despons L."/>
            <person name="Fabre E."/>
            <person name="Fairhead C."/>
            <person name="Ferry-Dumazet H."/>
            <person name="Groppi A."/>
            <person name="Hantraye F."/>
            <person name="Hennequin C."/>
            <person name="Jauniaux N."/>
            <person name="Joyet P."/>
            <person name="Kachouri R."/>
            <person name="Kerrest A."/>
            <person name="Koszul R."/>
            <person name="Lemaire M."/>
            <person name="Lesur I."/>
            <person name="Ma L."/>
            <person name="Muller H."/>
            <person name="Nicaud J.-M."/>
            <person name="Nikolski M."/>
            <person name="Oztas S."/>
            <person name="Ozier-Kalogeropoulos O."/>
            <person name="Pellenz S."/>
            <person name="Potier S."/>
            <person name="Richard G.-F."/>
            <person name="Straub M.-L."/>
            <person name="Suleau A."/>
            <person name="Swennen D."/>
            <person name="Tekaia F."/>
            <person name="Wesolowski-Louvel M."/>
            <person name="Westhof E."/>
            <person name="Wirth B."/>
            <person name="Zeniou-Meyer M."/>
            <person name="Zivanovic Y."/>
            <person name="Bolotin-Fukuhara M."/>
            <person name="Thierry A."/>
            <person name="Bouchier C."/>
            <person name="Caudron B."/>
            <person name="Scarpelli C."/>
            <person name="Gaillardin C."/>
            <person name="Weissenbach J."/>
            <person name="Wincker P."/>
            <person name="Souciet J.-L."/>
        </authorList>
    </citation>
    <scope>NUCLEOTIDE SEQUENCE [LARGE SCALE GENOMIC DNA]</scope>
    <source>
        <strain>CLIB 122 / E 150</strain>
    </source>
</reference>
<dbReference type="EMBL" id="CR382127">
    <property type="protein sequence ID" value="CAG83843.1"/>
    <property type="molecule type" value="Genomic_DNA"/>
</dbReference>
<dbReference type="RefSeq" id="XP_499916.1">
    <property type="nucleotide sequence ID" value="XM_499916.1"/>
</dbReference>
<dbReference type="SMR" id="Q6CHE5"/>
<dbReference type="FunCoup" id="Q6CHE5">
    <property type="interactions" value="808"/>
</dbReference>
<dbReference type="STRING" id="284591.Q6CHE5"/>
<dbReference type="EnsemblFungi" id="CAG83843">
    <property type="protein sequence ID" value="CAG83843"/>
    <property type="gene ID" value="YALI0_A09724g"/>
</dbReference>
<dbReference type="KEGG" id="yli:2906382"/>
<dbReference type="VEuPathDB" id="FungiDB:YALI0_A09724g"/>
<dbReference type="HOGENOM" id="CLU_002472_1_3_1"/>
<dbReference type="InParanoid" id="Q6CHE5"/>
<dbReference type="OMA" id="INMHAAR"/>
<dbReference type="OrthoDB" id="3451at4891"/>
<dbReference type="Proteomes" id="UP000001300">
    <property type="component" value="Chromosome A"/>
</dbReference>
<dbReference type="GO" id="GO:0005634">
    <property type="term" value="C:nucleus"/>
    <property type="evidence" value="ECO:0000318"/>
    <property type="project" value="GO_Central"/>
</dbReference>
<dbReference type="GO" id="GO:0005524">
    <property type="term" value="F:ATP binding"/>
    <property type="evidence" value="ECO:0007669"/>
    <property type="project" value="UniProtKB-KW"/>
</dbReference>
<dbReference type="GO" id="GO:0140664">
    <property type="term" value="F:ATP-dependent DNA damage sensor activity"/>
    <property type="evidence" value="ECO:0007669"/>
    <property type="project" value="InterPro"/>
</dbReference>
<dbReference type="GO" id="GO:0003690">
    <property type="term" value="F:double-stranded DNA binding"/>
    <property type="evidence" value="ECO:0000318"/>
    <property type="project" value="GO_Central"/>
</dbReference>
<dbReference type="GO" id="GO:0030983">
    <property type="term" value="F:mismatched DNA binding"/>
    <property type="evidence" value="ECO:0007669"/>
    <property type="project" value="InterPro"/>
</dbReference>
<dbReference type="GO" id="GO:0006298">
    <property type="term" value="P:mismatch repair"/>
    <property type="evidence" value="ECO:0000318"/>
    <property type="project" value="GO_Central"/>
</dbReference>
<dbReference type="GO" id="GO:0006312">
    <property type="term" value="P:mitotic recombination"/>
    <property type="evidence" value="ECO:0000318"/>
    <property type="project" value="GO_Central"/>
</dbReference>
<dbReference type="FunFam" id="3.30.420.110:FF:000010">
    <property type="entry name" value="DNA mismatch repair protein"/>
    <property type="match status" value="1"/>
</dbReference>
<dbReference type="FunFam" id="1.10.1420.10:FF:000004">
    <property type="entry name" value="DNA mismatch repair protein Msh3"/>
    <property type="match status" value="1"/>
</dbReference>
<dbReference type="Gene3D" id="1.10.1420.10">
    <property type="match status" value="2"/>
</dbReference>
<dbReference type="Gene3D" id="3.40.1170.10">
    <property type="entry name" value="DNA repair protein MutS, domain I"/>
    <property type="match status" value="1"/>
</dbReference>
<dbReference type="Gene3D" id="3.30.420.110">
    <property type="entry name" value="MutS, connector domain"/>
    <property type="match status" value="1"/>
</dbReference>
<dbReference type="Gene3D" id="3.40.50.300">
    <property type="entry name" value="P-loop containing nucleotide triphosphate hydrolases"/>
    <property type="match status" value="1"/>
</dbReference>
<dbReference type="InterPro" id="IPR007695">
    <property type="entry name" value="DNA_mismatch_repair_MutS-lik_N"/>
</dbReference>
<dbReference type="InterPro" id="IPR017261">
    <property type="entry name" value="DNA_mismatch_repair_MutS/MSH"/>
</dbReference>
<dbReference type="InterPro" id="IPR000432">
    <property type="entry name" value="DNA_mismatch_repair_MutS_C"/>
</dbReference>
<dbReference type="InterPro" id="IPR007861">
    <property type="entry name" value="DNA_mismatch_repair_MutS_clamp"/>
</dbReference>
<dbReference type="InterPro" id="IPR007696">
    <property type="entry name" value="DNA_mismatch_repair_MutS_core"/>
</dbReference>
<dbReference type="InterPro" id="IPR016151">
    <property type="entry name" value="DNA_mismatch_repair_MutS_N"/>
</dbReference>
<dbReference type="InterPro" id="IPR036187">
    <property type="entry name" value="DNA_mismatch_repair_MutS_sf"/>
</dbReference>
<dbReference type="InterPro" id="IPR045076">
    <property type="entry name" value="MutS"/>
</dbReference>
<dbReference type="InterPro" id="IPR036678">
    <property type="entry name" value="MutS_con_dom_sf"/>
</dbReference>
<dbReference type="InterPro" id="IPR027417">
    <property type="entry name" value="P-loop_NTPase"/>
</dbReference>
<dbReference type="PANTHER" id="PTHR11361:SF122">
    <property type="entry name" value="DNA MISMATCH REPAIR PROTEIN MSH3"/>
    <property type="match status" value="1"/>
</dbReference>
<dbReference type="PANTHER" id="PTHR11361">
    <property type="entry name" value="DNA MISMATCH REPAIR PROTEIN MUTS FAMILY MEMBER"/>
    <property type="match status" value="1"/>
</dbReference>
<dbReference type="Pfam" id="PF01624">
    <property type="entry name" value="MutS_I"/>
    <property type="match status" value="1"/>
</dbReference>
<dbReference type="Pfam" id="PF05192">
    <property type="entry name" value="MutS_III"/>
    <property type="match status" value="1"/>
</dbReference>
<dbReference type="Pfam" id="PF05190">
    <property type="entry name" value="MutS_IV"/>
    <property type="match status" value="1"/>
</dbReference>
<dbReference type="Pfam" id="PF00488">
    <property type="entry name" value="MutS_V"/>
    <property type="match status" value="1"/>
</dbReference>
<dbReference type="PIRSF" id="PIRSF037677">
    <property type="entry name" value="DNA_mis_repair_Msh6"/>
    <property type="match status" value="1"/>
</dbReference>
<dbReference type="SMART" id="SM00534">
    <property type="entry name" value="MUTSac"/>
    <property type="match status" value="1"/>
</dbReference>
<dbReference type="SMART" id="SM00533">
    <property type="entry name" value="MUTSd"/>
    <property type="match status" value="1"/>
</dbReference>
<dbReference type="SUPFAM" id="SSF55271">
    <property type="entry name" value="DNA repair protein MutS, domain I"/>
    <property type="match status" value="1"/>
</dbReference>
<dbReference type="SUPFAM" id="SSF53150">
    <property type="entry name" value="DNA repair protein MutS, domain II"/>
    <property type="match status" value="1"/>
</dbReference>
<dbReference type="SUPFAM" id="SSF48334">
    <property type="entry name" value="DNA repair protein MutS, domain III"/>
    <property type="match status" value="1"/>
</dbReference>
<dbReference type="SUPFAM" id="SSF52540">
    <property type="entry name" value="P-loop containing nucleoside triphosphate hydrolases"/>
    <property type="match status" value="1"/>
</dbReference>
<dbReference type="PROSITE" id="PS00486">
    <property type="entry name" value="DNA_MISMATCH_REPAIR_2"/>
    <property type="match status" value="1"/>
</dbReference>
<accession>Q6CHE5</accession>
<sequence>MKRSKQATLSRFFKKPKTGADAVHTEAVIGKKPTDSGSPAEQKDAKSPQQVTDEPPLEPVTVTTDVVAMDTQPDLSIGSEINSKSRPKSLASFKSGKSINTDHNPELKQKFRAKLELVRNKNDEDLPVITKKTKLNATEFQWYEIKKQHRDTLLFVQVGYKYHIYGDDAEIAHAQTRLFLSPGITNLKDIGNDGVVQQGSKYIKLAYSSFPVHRIDFYTKQLVEKGFKVGHVQQMEVAALKNVENKKGPMIRELTNTFTKGTYIESGNGGSVNDVQYSSYLVALHESKGDKPTVTLLATEVSTGDVIWDSFNDDYVKSELEIRLLTLAPCEILNCGVSSSTLKMCQKYMHRNKGRLAEMNVLEEEVEDPDAQVALFFEGKANAGTCSTVLELPAMVKTLILATSRYLTHCKLDSLFLLTNNFTRYTGSYMRLSANTVASLELFANTTDHTAKGSLFWVLNRCLTVFGSRELKKWVSRPLTDRTAILQRLSAVEAIIKSIYGAESDELTTLINKLVKLLKPIPDLSKMLMRLHYGQLNRKEVYLLLRELLFVAQEFKPGSGDKYIDTNPVLGEIFNSLGIHVSDIEKLLEEINPDAARQDEALTFFVTDPPSLVDRKKDLKKVEAELQIELLALRAELNRPKLQYSSVAGIDYLIEVANKDTKKLPLEWTKISGTKSVSRFRTPTLNSLVKRHEYCVEKLKAACDIEFNMFRSRCATHYEFFRSMVVAMSQFDCLFALAKVSGQSGWVKADYVDEGGIDLKDSRHVITEKLMTNYISNDIKIRCPTVVTGPNMGGKSSLVRQIALSVLLAHIGCYVPASKAQIPITDSILCRMGAQDNIMSGQSTFMVELCECAEILRNATSKSLVLLDEIGRGTTTTDGIAIAHSVLKHFIELEALTLFITHYPLGQLLDSEDSNKCDLVHMDITNTNPPIFTYKMKPGSATDSYGLNVAGLAGIPQAIINRAEEMGKDMKHDVMYQEGVRMLTDIKKVM</sequence>